<reference key="1">
    <citation type="submission" date="2006-12" db="EMBL/GenBank/DDBJ databases">
        <title>Complete sequence of Shewanella amazonensis SB2B.</title>
        <authorList>
            <consortium name="US DOE Joint Genome Institute"/>
            <person name="Copeland A."/>
            <person name="Lucas S."/>
            <person name="Lapidus A."/>
            <person name="Barry K."/>
            <person name="Detter J.C."/>
            <person name="Glavina del Rio T."/>
            <person name="Hammon N."/>
            <person name="Israni S."/>
            <person name="Dalin E."/>
            <person name="Tice H."/>
            <person name="Pitluck S."/>
            <person name="Munk A.C."/>
            <person name="Brettin T."/>
            <person name="Bruce D."/>
            <person name="Han C."/>
            <person name="Tapia R."/>
            <person name="Gilna P."/>
            <person name="Schmutz J."/>
            <person name="Larimer F."/>
            <person name="Land M."/>
            <person name="Hauser L."/>
            <person name="Kyrpides N."/>
            <person name="Mikhailova N."/>
            <person name="Fredrickson J."/>
            <person name="Richardson P."/>
        </authorList>
    </citation>
    <scope>NUCLEOTIDE SEQUENCE [LARGE SCALE GENOMIC DNA]</scope>
    <source>
        <strain>ATCC BAA-1098 / SB2B</strain>
    </source>
</reference>
<gene>
    <name evidence="1" type="primary">atpA</name>
    <name type="ordered locus">Sama_3646</name>
</gene>
<evidence type="ECO:0000255" key="1">
    <source>
        <dbReference type="HAMAP-Rule" id="MF_01346"/>
    </source>
</evidence>
<feature type="chain" id="PRO_0000302697" description="ATP synthase subunit alpha">
    <location>
        <begin position="1"/>
        <end position="513"/>
    </location>
</feature>
<feature type="binding site" evidence="1">
    <location>
        <begin position="169"/>
        <end position="176"/>
    </location>
    <ligand>
        <name>ATP</name>
        <dbReference type="ChEBI" id="CHEBI:30616"/>
    </ligand>
</feature>
<feature type="site" description="Required for activity" evidence="1">
    <location>
        <position position="373"/>
    </location>
</feature>
<dbReference type="EC" id="7.1.2.2" evidence="1"/>
<dbReference type="EMBL" id="CP000507">
    <property type="protein sequence ID" value="ABM01849.1"/>
    <property type="molecule type" value="Genomic_DNA"/>
</dbReference>
<dbReference type="RefSeq" id="WP_011761752.1">
    <property type="nucleotide sequence ID" value="NC_008700.1"/>
</dbReference>
<dbReference type="SMR" id="A1SBU2"/>
<dbReference type="STRING" id="326297.Sama_3646"/>
<dbReference type="KEGG" id="saz:Sama_3646"/>
<dbReference type="eggNOG" id="COG0056">
    <property type="taxonomic scope" value="Bacteria"/>
</dbReference>
<dbReference type="HOGENOM" id="CLU_010091_2_1_6"/>
<dbReference type="OrthoDB" id="9803053at2"/>
<dbReference type="Proteomes" id="UP000009175">
    <property type="component" value="Chromosome"/>
</dbReference>
<dbReference type="GO" id="GO:0005886">
    <property type="term" value="C:plasma membrane"/>
    <property type="evidence" value="ECO:0007669"/>
    <property type="project" value="UniProtKB-SubCell"/>
</dbReference>
<dbReference type="GO" id="GO:0045259">
    <property type="term" value="C:proton-transporting ATP synthase complex"/>
    <property type="evidence" value="ECO:0007669"/>
    <property type="project" value="UniProtKB-KW"/>
</dbReference>
<dbReference type="GO" id="GO:0043531">
    <property type="term" value="F:ADP binding"/>
    <property type="evidence" value="ECO:0007669"/>
    <property type="project" value="TreeGrafter"/>
</dbReference>
<dbReference type="GO" id="GO:0005524">
    <property type="term" value="F:ATP binding"/>
    <property type="evidence" value="ECO:0007669"/>
    <property type="project" value="UniProtKB-UniRule"/>
</dbReference>
<dbReference type="GO" id="GO:0046933">
    <property type="term" value="F:proton-transporting ATP synthase activity, rotational mechanism"/>
    <property type="evidence" value="ECO:0007669"/>
    <property type="project" value="UniProtKB-UniRule"/>
</dbReference>
<dbReference type="CDD" id="cd18113">
    <property type="entry name" value="ATP-synt_F1_alpha_C"/>
    <property type="match status" value="1"/>
</dbReference>
<dbReference type="CDD" id="cd18116">
    <property type="entry name" value="ATP-synt_F1_alpha_N"/>
    <property type="match status" value="1"/>
</dbReference>
<dbReference type="CDD" id="cd01132">
    <property type="entry name" value="F1-ATPase_alpha_CD"/>
    <property type="match status" value="1"/>
</dbReference>
<dbReference type="FunFam" id="1.20.150.20:FF:000001">
    <property type="entry name" value="ATP synthase subunit alpha"/>
    <property type="match status" value="1"/>
</dbReference>
<dbReference type="FunFam" id="2.40.30.20:FF:000001">
    <property type="entry name" value="ATP synthase subunit alpha"/>
    <property type="match status" value="1"/>
</dbReference>
<dbReference type="FunFam" id="3.40.50.300:FF:000002">
    <property type="entry name" value="ATP synthase subunit alpha"/>
    <property type="match status" value="1"/>
</dbReference>
<dbReference type="Gene3D" id="2.40.30.20">
    <property type="match status" value="1"/>
</dbReference>
<dbReference type="Gene3D" id="1.20.150.20">
    <property type="entry name" value="ATP synthase alpha/beta chain, C-terminal domain"/>
    <property type="match status" value="1"/>
</dbReference>
<dbReference type="Gene3D" id="3.40.50.300">
    <property type="entry name" value="P-loop containing nucleotide triphosphate hydrolases"/>
    <property type="match status" value="1"/>
</dbReference>
<dbReference type="HAMAP" id="MF_01346">
    <property type="entry name" value="ATP_synth_alpha_bact"/>
    <property type="match status" value="1"/>
</dbReference>
<dbReference type="InterPro" id="IPR023366">
    <property type="entry name" value="ATP_synth_asu-like_sf"/>
</dbReference>
<dbReference type="InterPro" id="IPR000793">
    <property type="entry name" value="ATP_synth_asu_C"/>
</dbReference>
<dbReference type="InterPro" id="IPR038376">
    <property type="entry name" value="ATP_synth_asu_C_sf"/>
</dbReference>
<dbReference type="InterPro" id="IPR033732">
    <property type="entry name" value="ATP_synth_F1_a_nt-bd_dom"/>
</dbReference>
<dbReference type="InterPro" id="IPR005294">
    <property type="entry name" value="ATP_synth_F1_asu"/>
</dbReference>
<dbReference type="InterPro" id="IPR020003">
    <property type="entry name" value="ATPase_a/bsu_AS"/>
</dbReference>
<dbReference type="InterPro" id="IPR004100">
    <property type="entry name" value="ATPase_F1/V1/A1_a/bsu_N"/>
</dbReference>
<dbReference type="InterPro" id="IPR036121">
    <property type="entry name" value="ATPase_F1/V1/A1_a/bsu_N_sf"/>
</dbReference>
<dbReference type="InterPro" id="IPR000194">
    <property type="entry name" value="ATPase_F1/V1/A1_a/bsu_nucl-bd"/>
</dbReference>
<dbReference type="InterPro" id="IPR027417">
    <property type="entry name" value="P-loop_NTPase"/>
</dbReference>
<dbReference type="NCBIfam" id="TIGR00962">
    <property type="entry name" value="atpA"/>
    <property type="match status" value="1"/>
</dbReference>
<dbReference type="NCBIfam" id="NF009884">
    <property type="entry name" value="PRK13343.1"/>
    <property type="match status" value="1"/>
</dbReference>
<dbReference type="PANTHER" id="PTHR48082">
    <property type="entry name" value="ATP SYNTHASE SUBUNIT ALPHA, MITOCHONDRIAL"/>
    <property type="match status" value="1"/>
</dbReference>
<dbReference type="PANTHER" id="PTHR48082:SF2">
    <property type="entry name" value="ATP SYNTHASE SUBUNIT ALPHA, MITOCHONDRIAL"/>
    <property type="match status" value="1"/>
</dbReference>
<dbReference type="Pfam" id="PF00006">
    <property type="entry name" value="ATP-synt_ab"/>
    <property type="match status" value="1"/>
</dbReference>
<dbReference type="Pfam" id="PF00306">
    <property type="entry name" value="ATP-synt_ab_C"/>
    <property type="match status" value="1"/>
</dbReference>
<dbReference type="Pfam" id="PF02874">
    <property type="entry name" value="ATP-synt_ab_N"/>
    <property type="match status" value="1"/>
</dbReference>
<dbReference type="SUPFAM" id="SSF47917">
    <property type="entry name" value="C-terminal domain of alpha and beta subunits of F1 ATP synthase"/>
    <property type="match status" value="1"/>
</dbReference>
<dbReference type="SUPFAM" id="SSF50615">
    <property type="entry name" value="N-terminal domain of alpha and beta subunits of F1 ATP synthase"/>
    <property type="match status" value="1"/>
</dbReference>
<dbReference type="SUPFAM" id="SSF52540">
    <property type="entry name" value="P-loop containing nucleoside triphosphate hydrolases"/>
    <property type="match status" value="1"/>
</dbReference>
<dbReference type="PROSITE" id="PS00152">
    <property type="entry name" value="ATPASE_ALPHA_BETA"/>
    <property type="match status" value="1"/>
</dbReference>
<sequence length="513" mass="55197">MQLNSTEISDLIKQRIEQFDVVSEARNEGTIVAVSDGIIRVHGLADVMQGEMIELPGNRYAIALNLERDSVGAVVMGPYADLAEGVKVKTTGRILEVPVGRGLLGRVVNTLGEPIDGKGPIDNDGFAPVEVIAPGVIDRKSVSQPVQTGYKAVDSMIPIGRGQRELIIGDRQTGKTAMAIDAIINQRDSGIKCVYVAVGQKASTIANVVRKLEEHGALANTVVVVASASEAAALQFLAPYSGCTMGEYFRDRGEDALIVYDDLSKQAVAYRQISLLLRRPPGREAYPGDVFYLHSRLLERASRVNEEYVEKFTKGAVTGKTGSLTALPIIETQAGDVSAFVPTNVISITDGQIFLETNLFNSGLRPAVNPGISVSRVGGAAQTKIIKKLSGGIRTALAQYRELAAFSQFASDLDDATRAQLEHGERVTELMKQKQYAPMSVAEQAVVIFAAEKGFLKGIALKKVGDFEAALLAFMNAEHANLMKLINDTGDYNAEIEAELKAGLDKFVATQTW</sequence>
<accession>A1SBU2</accession>
<protein>
    <recommendedName>
        <fullName evidence="1">ATP synthase subunit alpha</fullName>
        <ecNumber evidence="1">7.1.2.2</ecNumber>
    </recommendedName>
    <alternativeName>
        <fullName evidence="1">ATP synthase F1 sector subunit alpha</fullName>
    </alternativeName>
    <alternativeName>
        <fullName evidence="1">F-ATPase subunit alpha</fullName>
    </alternativeName>
</protein>
<name>ATPA_SHEAM</name>
<comment type="function">
    <text evidence="1">Produces ATP from ADP in the presence of a proton gradient across the membrane. The alpha chain is a regulatory subunit.</text>
</comment>
<comment type="catalytic activity">
    <reaction evidence="1">
        <text>ATP + H2O + 4 H(+)(in) = ADP + phosphate + 5 H(+)(out)</text>
        <dbReference type="Rhea" id="RHEA:57720"/>
        <dbReference type="ChEBI" id="CHEBI:15377"/>
        <dbReference type="ChEBI" id="CHEBI:15378"/>
        <dbReference type="ChEBI" id="CHEBI:30616"/>
        <dbReference type="ChEBI" id="CHEBI:43474"/>
        <dbReference type="ChEBI" id="CHEBI:456216"/>
        <dbReference type="EC" id="7.1.2.2"/>
    </reaction>
</comment>
<comment type="subunit">
    <text evidence="1">F-type ATPases have 2 components, CF(1) - the catalytic core - and CF(0) - the membrane proton channel. CF(1) has five subunits: alpha(3), beta(3), gamma(1), delta(1), epsilon(1). CF(0) has three main subunits: a(1), b(2) and c(9-12). The alpha and beta chains form an alternating ring which encloses part of the gamma chain. CF(1) is attached to CF(0) by a central stalk formed by the gamma and epsilon chains, while a peripheral stalk is formed by the delta and b chains.</text>
</comment>
<comment type="subcellular location">
    <subcellularLocation>
        <location evidence="1">Cell inner membrane</location>
        <topology evidence="1">Peripheral membrane protein</topology>
    </subcellularLocation>
</comment>
<comment type="similarity">
    <text evidence="1">Belongs to the ATPase alpha/beta chains family.</text>
</comment>
<keyword id="KW-0066">ATP synthesis</keyword>
<keyword id="KW-0067">ATP-binding</keyword>
<keyword id="KW-0997">Cell inner membrane</keyword>
<keyword id="KW-1003">Cell membrane</keyword>
<keyword id="KW-0139">CF(1)</keyword>
<keyword id="KW-0375">Hydrogen ion transport</keyword>
<keyword id="KW-0406">Ion transport</keyword>
<keyword id="KW-0472">Membrane</keyword>
<keyword id="KW-0547">Nucleotide-binding</keyword>
<keyword id="KW-1185">Reference proteome</keyword>
<keyword id="KW-1278">Translocase</keyword>
<keyword id="KW-0813">Transport</keyword>
<proteinExistence type="inferred from homology"/>
<organism>
    <name type="scientific">Shewanella amazonensis (strain ATCC BAA-1098 / SB2B)</name>
    <dbReference type="NCBI Taxonomy" id="326297"/>
    <lineage>
        <taxon>Bacteria</taxon>
        <taxon>Pseudomonadati</taxon>
        <taxon>Pseudomonadota</taxon>
        <taxon>Gammaproteobacteria</taxon>
        <taxon>Alteromonadales</taxon>
        <taxon>Shewanellaceae</taxon>
        <taxon>Shewanella</taxon>
    </lineage>
</organism>